<name>G6PI_ALISL</name>
<organism>
    <name type="scientific">Aliivibrio salmonicida (strain LFI1238)</name>
    <name type="common">Vibrio salmonicida (strain LFI1238)</name>
    <dbReference type="NCBI Taxonomy" id="316275"/>
    <lineage>
        <taxon>Bacteria</taxon>
        <taxon>Pseudomonadati</taxon>
        <taxon>Pseudomonadota</taxon>
        <taxon>Gammaproteobacteria</taxon>
        <taxon>Vibrionales</taxon>
        <taxon>Vibrionaceae</taxon>
        <taxon>Aliivibrio</taxon>
    </lineage>
</organism>
<protein>
    <recommendedName>
        <fullName evidence="1">Glucose-6-phosphate isomerase</fullName>
        <shortName evidence="1">GPI</shortName>
        <ecNumber evidence="1">5.3.1.9</ecNumber>
    </recommendedName>
    <alternativeName>
        <fullName evidence="1">Phosphoglucose isomerase</fullName>
        <shortName evidence="1">PGI</shortName>
    </alternativeName>
    <alternativeName>
        <fullName evidence="1">Phosphohexose isomerase</fullName>
        <shortName evidence="1">PHI</shortName>
    </alternativeName>
</protein>
<reference key="1">
    <citation type="journal article" date="2008" name="BMC Genomics">
        <title>The genome sequence of the fish pathogen Aliivibrio salmonicida strain LFI1238 shows extensive evidence of gene decay.</title>
        <authorList>
            <person name="Hjerde E."/>
            <person name="Lorentzen M.S."/>
            <person name="Holden M.T."/>
            <person name="Seeger K."/>
            <person name="Paulsen S."/>
            <person name="Bason N."/>
            <person name="Churcher C."/>
            <person name="Harris D."/>
            <person name="Norbertczak H."/>
            <person name="Quail M.A."/>
            <person name="Sanders S."/>
            <person name="Thurston S."/>
            <person name="Parkhill J."/>
            <person name="Willassen N.P."/>
            <person name="Thomson N.R."/>
        </authorList>
    </citation>
    <scope>NUCLEOTIDE SEQUENCE [LARGE SCALE GENOMIC DNA]</scope>
    <source>
        <strain>LFI1238</strain>
    </source>
</reference>
<evidence type="ECO:0000255" key="1">
    <source>
        <dbReference type="HAMAP-Rule" id="MF_00473"/>
    </source>
</evidence>
<keyword id="KW-0963">Cytoplasm</keyword>
<keyword id="KW-0312">Gluconeogenesis</keyword>
<keyword id="KW-0324">Glycolysis</keyword>
<keyword id="KW-0413">Isomerase</keyword>
<dbReference type="EC" id="5.3.1.9" evidence="1"/>
<dbReference type="EMBL" id="FM178379">
    <property type="protein sequence ID" value="CAQ78070.1"/>
    <property type="molecule type" value="Genomic_DNA"/>
</dbReference>
<dbReference type="RefSeq" id="WP_012549211.1">
    <property type="nucleotide sequence ID" value="NC_011312.1"/>
</dbReference>
<dbReference type="SMR" id="B6ELK8"/>
<dbReference type="KEGG" id="vsa:VSAL_I0385"/>
<dbReference type="eggNOG" id="COG0166">
    <property type="taxonomic scope" value="Bacteria"/>
</dbReference>
<dbReference type="HOGENOM" id="CLU_017947_3_1_6"/>
<dbReference type="UniPathway" id="UPA00109">
    <property type="reaction ID" value="UER00181"/>
</dbReference>
<dbReference type="UniPathway" id="UPA00138"/>
<dbReference type="Proteomes" id="UP000001730">
    <property type="component" value="Chromosome 1"/>
</dbReference>
<dbReference type="GO" id="GO:0005829">
    <property type="term" value="C:cytosol"/>
    <property type="evidence" value="ECO:0007669"/>
    <property type="project" value="TreeGrafter"/>
</dbReference>
<dbReference type="GO" id="GO:0097367">
    <property type="term" value="F:carbohydrate derivative binding"/>
    <property type="evidence" value="ECO:0007669"/>
    <property type="project" value="InterPro"/>
</dbReference>
<dbReference type="GO" id="GO:0004347">
    <property type="term" value="F:glucose-6-phosphate isomerase activity"/>
    <property type="evidence" value="ECO:0007669"/>
    <property type="project" value="UniProtKB-UniRule"/>
</dbReference>
<dbReference type="GO" id="GO:0048029">
    <property type="term" value="F:monosaccharide binding"/>
    <property type="evidence" value="ECO:0007669"/>
    <property type="project" value="TreeGrafter"/>
</dbReference>
<dbReference type="GO" id="GO:0006094">
    <property type="term" value="P:gluconeogenesis"/>
    <property type="evidence" value="ECO:0007669"/>
    <property type="project" value="UniProtKB-UniRule"/>
</dbReference>
<dbReference type="GO" id="GO:0051156">
    <property type="term" value="P:glucose 6-phosphate metabolic process"/>
    <property type="evidence" value="ECO:0007669"/>
    <property type="project" value="TreeGrafter"/>
</dbReference>
<dbReference type="GO" id="GO:0006096">
    <property type="term" value="P:glycolytic process"/>
    <property type="evidence" value="ECO:0007669"/>
    <property type="project" value="UniProtKB-UniRule"/>
</dbReference>
<dbReference type="CDD" id="cd05015">
    <property type="entry name" value="SIS_PGI_1"/>
    <property type="match status" value="1"/>
</dbReference>
<dbReference type="CDD" id="cd05016">
    <property type="entry name" value="SIS_PGI_2"/>
    <property type="match status" value="1"/>
</dbReference>
<dbReference type="FunFam" id="1.10.1390.10:FF:000001">
    <property type="entry name" value="Glucose-6-phosphate isomerase"/>
    <property type="match status" value="1"/>
</dbReference>
<dbReference type="FunFam" id="3.40.50.10490:FF:000004">
    <property type="entry name" value="Glucose-6-phosphate isomerase"/>
    <property type="match status" value="1"/>
</dbReference>
<dbReference type="Gene3D" id="1.10.1390.10">
    <property type="match status" value="1"/>
</dbReference>
<dbReference type="Gene3D" id="3.40.50.10490">
    <property type="entry name" value="Glucose-6-phosphate isomerase like protein, domain 1"/>
    <property type="match status" value="2"/>
</dbReference>
<dbReference type="HAMAP" id="MF_00473">
    <property type="entry name" value="G6P_isomerase"/>
    <property type="match status" value="1"/>
</dbReference>
<dbReference type="InterPro" id="IPR001672">
    <property type="entry name" value="G6P_Isomerase"/>
</dbReference>
<dbReference type="InterPro" id="IPR023096">
    <property type="entry name" value="G6P_Isomerase_C"/>
</dbReference>
<dbReference type="InterPro" id="IPR018189">
    <property type="entry name" value="Phosphoglucose_isomerase_CS"/>
</dbReference>
<dbReference type="InterPro" id="IPR046348">
    <property type="entry name" value="SIS_dom_sf"/>
</dbReference>
<dbReference type="InterPro" id="IPR035476">
    <property type="entry name" value="SIS_PGI_1"/>
</dbReference>
<dbReference type="InterPro" id="IPR035482">
    <property type="entry name" value="SIS_PGI_2"/>
</dbReference>
<dbReference type="NCBIfam" id="NF001211">
    <property type="entry name" value="PRK00179.1"/>
    <property type="match status" value="1"/>
</dbReference>
<dbReference type="PANTHER" id="PTHR11469">
    <property type="entry name" value="GLUCOSE-6-PHOSPHATE ISOMERASE"/>
    <property type="match status" value="1"/>
</dbReference>
<dbReference type="PANTHER" id="PTHR11469:SF1">
    <property type="entry name" value="GLUCOSE-6-PHOSPHATE ISOMERASE"/>
    <property type="match status" value="1"/>
</dbReference>
<dbReference type="Pfam" id="PF00342">
    <property type="entry name" value="PGI"/>
    <property type="match status" value="1"/>
</dbReference>
<dbReference type="PRINTS" id="PR00662">
    <property type="entry name" value="G6PISOMERASE"/>
</dbReference>
<dbReference type="SUPFAM" id="SSF53697">
    <property type="entry name" value="SIS domain"/>
    <property type="match status" value="1"/>
</dbReference>
<dbReference type="PROSITE" id="PS00765">
    <property type="entry name" value="P_GLUCOSE_ISOMERASE_1"/>
    <property type="match status" value="1"/>
</dbReference>
<dbReference type="PROSITE" id="PS00174">
    <property type="entry name" value="P_GLUCOSE_ISOMERASE_2"/>
    <property type="match status" value="1"/>
</dbReference>
<dbReference type="PROSITE" id="PS51463">
    <property type="entry name" value="P_GLUCOSE_ISOMERASE_3"/>
    <property type="match status" value="1"/>
</dbReference>
<comment type="function">
    <text evidence="1">Catalyzes the reversible isomerization of glucose-6-phosphate to fructose-6-phosphate.</text>
</comment>
<comment type="catalytic activity">
    <reaction evidence="1">
        <text>alpha-D-glucose 6-phosphate = beta-D-fructose 6-phosphate</text>
        <dbReference type="Rhea" id="RHEA:11816"/>
        <dbReference type="ChEBI" id="CHEBI:57634"/>
        <dbReference type="ChEBI" id="CHEBI:58225"/>
        <dbReference type="EC" id="5.3.1.9"/>
    </reaction>
</comment>
<comment type="pathway">
    <text evidence="1">Carbohydrate biosynthesis; gluconeogenesis.</text>
</comment>
<comment type="pathway">
    <text evidence="1">Carbohydrate degradation; glycolysis; D-glyceraldehyde 3-phosphate and glycerone phosphate from D-glucose: step 2/4.</text>
</comment>
<comment type="subcellular location">
    <subcellularLocation>
        <location evidence="1">Cytoplasm</location>
    </subcellularLocation>
</comment>
<comment type="similarity">
    <text evidence="1">Belongs to the GPI family.</text>
</comment>
<proteinExistence type="inferred from homology"/>
<sequence length="550" mass="61161">MLKNINPTETQAWADLTAHFETAQNFNLADLFSADAQRFDKFSTTFGQDILVDFSKNLVTEETMQKLFSLAEQTELSEAIKAMFSGEKINKTEDRSVLHTALRNRSNTPVIVDGEDVMPAVNAVLEKMKAFTERLISGEWKGYTGKEITDIVNIGIGGSDLGPYMVSEALAPYKTRLNMHFVSNVDGTHIVETLKPLNPETTLFLIASKTFTTQETMTNAHSARDWFLAEAGDQAHVAKHFAALSTNAESVSEFGIDTDNMFEFWDWVGGRYSLWSAIGLSIALAVGFDNFVELLEGAHEVDNHFANTELENNVPVILALIGLWYNNFHGSESESILPYDQYLHRFAAYFQQGNMESNGKCVDRNGNPVDYQTGPIIWGEPGTNGQHAFYQLIHQGTKLIPCDFIAPAISHNQVGDHHQKLMSNFFAQTEALAFGKKEETVRAEFAAAGKTEAEMAELVAFKVFEGNRPTNSILVKKVTPKTLGNLIAMYEHKIFVQGVIWNIFSFDQWGVELGKQLANQILPELADDKAINSHDSSTNGLINAFKAFKA</sequence>
<gene>
    <name evidence="1" type="primary">pgi</name>
    <name type="ordered locus">VSAL_I0385</name>
</gene>
<accession>B6ELK8</accession>
<feature type="chain" id="PRO_1000125688" description="Glucose-6-phosphate isomerase">
    <location>
        <begin position="1"/>
        <end position="550"/>
    </location>
</feature>
<feature type="active site" description="Proton donor" evidence="1">
    <location>
        <position position="356"/>
    </location>
</feature>
<feature type="active site" evidence="1">
    <location>
        <position position="387"/>
    </location>
</feature>
<feature type="active site" evidence="1">
    <location>
        <position position="515"/>
    </location>
</feature>